<feature type="chain" id="PRO_0000159482" description="Cysteine--tRNA ligase">
    <location>
        <begin position="1"/>
        <end position="466"/>
    </location>
</feature>
<feature type="short sequence motif" description="'HIGH' region">
    <location>
        <begin position="30"/>
        <end position="40"/>
    </location>
</feature>
<feature type="short sequence motif" description="'KMSKS' region">
    <location>
        <begin position="265"/>
        <end position="269"/>
    </location>
</feature>
<feature type="binding site" evidence="1">
    <location>
        <position position="28"/>
    </location>
    <ligand>
        <name>Zn(2+)</name>
        <dbReference type="ChEBI" id="CHEBI:29105"/>
    </ligand>
</feature>
<feature type="binding site" evidence="1">
    <location>
        <position position="208"/>
    </location>
    <ligand>
        <name>Zn(2+)</name>
        <dbReference type="ChEBI" id="CHEBI:29105"/>
    </ligand>
</feature>
<feature type="binding site" evidence="1">
    <location>
        <position position="233"/>
    </location>
    <ligand>
        <name>Zn(2+)</name>
        <dbReference type="ChEBI" id="CHEBI:29105"/>
    </ligand>
</feature>
<feature type="binding site" evidence="1">
    <location>
        <position position="237"/>
    </location>
    <ligand>
        <name>Zn(2+)</name>
        <dbReference type="ChEBI" id="CHEBI:29105"/>
    </ligand>
</feature>
<feature type="binding site" evidence="1">
    <location>
        <position position="268"/>
    </location>
    <ligand>
        <name>ATP</name>
        <dbReference type="ChEBI" id="CHEBI:30616"/>
    </ligand>
</feature>
<organism>
    <name type="scientific">Staphylococcus aureus (strain MW2)</name>
    <dbReference type="NCBI Taxonomy" id="196620"/>
    <lineage>
        <taxon>Bacteria</taxon>
        <taxon>Bacillati</taxon>
        <taxon>Bacillota</taxon>
        <taxon>Bacilli</taxon>
        <taxon>Bacillales</taxon>
        <taxon>Staphylococcaceae</taxon>
        <taxon>Staphylococcus</taxon>
    </lineage>
</organism>
<evidence type="ECO:0000255" key="1">
    <source>
        <dbReference type="HAMAP-Rule" id="MF_00041"/>
    </source>
</evidence>
<keyword id="KW-0030">Aminoacyl-tRNA synthetase</keyword>
<keyword id="KW-0067">ATP-binding</keyword>
<keyword id="KW-0963">Cytoplasm</keyword>
<keyword id="KW-0436">Ligase</keyword>
<keyword id="KW-0479">Metal-binding</keyword>
<keyword id="KW-0547">Nucleotide-binding</keyword>
<keyword id="KW-0648">Protein biosynthesis</keyword>
<keyword id="KW-0862">Zinc</keyword>
<sequence length="466" mass="53713">MITLYNTLTRQKEVFKPIEPGKVKMYVCGPTVYNYIHIGNARPAINYDVVRRYFEYQGYNVEYVSNFTDVDDKLIKRSQELNQSVPEIAEKYIAAFHEDVGALNVRKATSNPRVMDHMDDIIQFIKDLVDRGYAYESGGDVYFRTRKFEGYGKLSHQSIDDLKVGARIDAGEHKEDALDFTLWKKAKPGEISWDSPFGEGRPGWHIECSVMAFHELGPTIDIHAGGSDLQFPHHENEIAQSEAHNHAPFANYWMHNGFINIDNEKMSKSLGNFILVHDIIKEVDPDVLRFFMISVHYRSPINYNLELVESARSGLERIRNSYQLIEERAQIATNIENQQTYIDQIDAILNRFETVMNDDFNTANAITAWYDLAKLANKYVLENTTSTEVIDKFKAVYQIFSDVLGVPLKSKNADELLDEDVEKLIEERNEARKNKDFARADEIRDMLKSQNIILEDTPQGVRFKRG</sequence>
<protein>
    <recommendedName>
        <fullName evidence="1">Cysteine--tRNA ligase</fullName>
        <ecNumber evidence="1">6.1.1.16</ecNumber>
    </recommendedName>
    <alternativeName>
        <fullName evidence="1">Cysteinyl-tRNA synthetase</fullName>
        <shortName evidence="1">CysRS</shortName>
    </alternativeName>
</protein>
<dbReference type="EC" id="6.1.1.16" evidence="1"/>
<dbReference type="EMBL" id="BA000033">
    <property type="protein sequence ID" value="BAB94350.1"/>
    <property type="molecule type" value="Genomic_DNA"/>
</dbReference>
<dbReference type="RefSeq" id="WP_000631973.1">
    <property type="nucleotide sequence ID" value="NC_003923.1"/>
</dbReference>
<dbReference type="SMR" id="Q8NXY7"/>
<dbReference type="KEGG" id="sam:MW0485"/>
<dbReference type="HOGENOM" id="CLU_013528_0_1_9"/>
<dbReference type="GO" id="GO:0005829">
    <property type="term" value="C:cytosol"/>
    <property type="evidence" value="ECO:0007669"/>
    <property type="project" value="TreeGrafter"/>
</dbReference>
<dbReference type="GO" id="GO:0005524">
    <property type="term" value="F:ATP binding"/>
    <property type="evidence" value="ECO:0007669"/>
    <property type="project" value="UniProtKB-UniRule"/>
</dbReference>
<dbReference type="GO" id="GO:0004817">
    <property type="term" value="F:cysteine-tRNA ligase activity"/>
    <property type="evidence" value="ECO:0007669"/>
    <property type="project" value="UniProtKB-UniRule"/>
</dbReference>
<dbReference type="GO" id="GO:0008270">
    <property type="term" value="F:zinc ion binding"/>
    <property type="evidence" value="ECO:0007669"/>
    <property type="project" value="UniProtKB-UniRule"/>
</dbReference>
<dbReference type="GO" id="GO:0006423">
    <property type="term" value="P:cysteinyl-tRNA aminoacylation"/>
    <property type="evidence" value="ECO:0007669"/>
    <property type="project" value="UniProtKB-UniRule"/>
</dbReference>
<dbReference type="CDD" id="cd00672">
    <property type="entry name" value="CysRS_core"/>
    <property type="match status" value="1"/>
</dbReference>
<dbReference type="FunFam" id="1.20.120.1910:FF:000002">
    <property type="entry name" value="Cysteine--tRNA ligase"/>
    <property type="match status" value="1"/>
</dbReference>
<dbReference type="FunFam" id="3.40.50.620:FF:000009">
    <property type="entry name" value="Cysteine--tRNA ligase"/>
    <property type="match status" value="1"/>
</dbReference>
<dbReference type="Gene3D" id="1.20.120.1910">
    <property type="entry name" value="Cysteine-tRNA ligase, C-terminal anti-codon recognition domain"/>
    <property type="match status" value="1"/>
</dbReference>
<dbReference type="Gene3D" id="3.40.50.620">
    <property type="entry name" value="HUPs"/>
    <property type="match status" value="1"/>
</dbReference>
<dbReference type="HAMAP" id="MF_00041">
    <property type="entry name" value="Cys_tRNA_synth"/>
    <property type="match status" value="1"/>
</dbReference>
<dbReference type="InterPro" id="IPR015803">
    <property type="entry name" value="Cys-tRNA-ligase"/>
</dbReference>
<dbReference type="InterPro" id="IPR015273">
    <property type="entry name" value="Cys-tRNA-synt_Ia_DALR"/>
</dbReference>
<dbReference type="InterPro" id="IPR024909">
    <property type="entry name" value="Cys-tRNA/MSH_ligase"/>
</dbReference>
<dbReference type="InterPro" id="IPR056411">
    <property type="entry name" value="CysS_C"/>
</dbReference>
<dbReference type="InterPro" id="IPR014729">
    <property type="entry name" value="Rossmann-like_a/b/a_fold"/>
</dbReference>
<dbReference type="InterPro" id="IPR032678">
    <property type="entry name" value="tRNA-synt_1_cat_dom"/>
</dbReference>
<dbReference type="InterPro" id="IPR009080">
    <property type="entry name" value="tRNAsynth_Ia_anticodon-bd"/>
</dbReference>
<dbReference type="NCBIfam" id="TIGR00435">
    <property type="entry name" value="cysS"/>
    <property type="match status" value="1"/>
</dbReference>
<dbReference type="PANTHER" id="PTHR10890:SF3">
    <property type="entry name" value="CYSTEINE--TRNA LIGASE, CYTOPLASMIC"/>
    <property type="match status" value="1"/>
</dbReference>
<dbReference type="PANTHER" id="PTHR10890">
    <property type="entry name" value="CYSTEINYL-TRNA SYNTHETASE"/>
    <property type="match status" value="1"/>
</dbReference>
<dbReference type="Pfam" id="PF23493">
    <property type="entry name" value="CysS_C"/>
    <property type="match status" value="1"/>
</dbReference>
<dbReference type="Pfam" id="PF09190">
    <property type="entry name" value="DALR_2"/>
    <property type="match status" value="1"/>
</dbReference>
<dbReference type="Pfam" id="PF01406">
    <property type="entry name" value="tRNA-synt_1e"/>
    <property type="match status" value="1"/>
</dbReference>
<dbReference type="PRINTS" id="PR00983">
    <property type="entry name" value="TRNASYNTHCYS"/>
</dbReference>
<dbReference type="SMART" id="SM00840">
    <property type="entry name" value="DALR_2"/>
    <property type="match status" value="1"/>
</dbReference>
<dbReference type="SUPFAM" id="SSF47323">
    <property type="entry name" value="Anticodon-binding domain of a subclass of class I aminoacyl-tRNA synthetases"/>
    <property type="match status" value="1"/>
</dbReference>
<dbReference type="SUPFAM" id="SSF52374">
    <property type="entry name" value="Nucleotidylyl transferase"/>
    <property type="match status" value="1"/>
</dbReference>
<comment type="catalytic activity">
    <reaction evidence="1">
        <text>tRNA(Cys) + L-cysteine + ATP = L-cysteinyl-tRNA(Cys) + AMP + diphosphate</text>
        <dbReference type="Rhea" id="RHEA:17773"/>
        <dbReference type="Rhea" id="RHEA-COMP:9661"/>
        <dbReference type="Rhea" id="RHEA-COMP:9679"/>
        <dbReference type="ChEBI" id="CHEBI:30616"/>
        <dbReference type="ChEBI" id="CHEBI:33019"/>
        <dbReference type="ChEBI" id="CHEBI:35235"/>
        <dbReference type="ChEBI" id="CHEBI:78442"/>
        <dbReference type="ChEBI" id="CHEBI:78517"/>
        <dbReference type="ChEBI" id="CHEBI:456215"/>
        <dbReference type="EC" id="6.1.1.16"/>
    </reaction>
</comment>
<comment type="cofactor">
    <cofactor evidence="1">
        <name>Zn(2+)</name>
        <dbReference type="ChEBI" id="CHEBI:29105"/>
    </cofactor>
    <text evidence="1">Binds 1 zinc ion per subunit.</text>
</comment>
<comment type="subunit">
    <text evidence="1">Monomer.</text>
</comment>
<comment type="subcellular location">
    <subcellularLocation>
        <location evidence="1">Cytoplasm</location>
    </subcellularLocation>
</comment>
<comment type="similarity">
    <text evidence="1">Belongs to the class-I aminoacyl-tRNA synthetase family.</text>
</comment>
<name>SYC_STAAW</name>
<accession>Q8NXY7</accession>
<proteinExistence type="inferred from homology"/>
<reference key="1">
    <citation type="journal article" date="2002" name="Lancet">
        <title>Genome and virulence determinants of high virulence community-acquired MRSA.</title>
        <authorList>
            <person name="Baba T."/>
            <person name="Takeuchi F."/>
            <person name="Kuroda M."/>
            <person name="Yuzawa H."/>
            <person name="Aoki K."/>
            <person name="Oguchi A."/>
            <person name="Nagai Y."/>
            <person name="Iwama N."/>
            <person name="Asano K."/>
            <person name="Naimi T."/>
            <person name="Kuroda H."/>
            <person name="Cui L."/>
            <person name="Yamamoto K."/>
            <person name="Hiramatsu K."/>
        </authorList>
    </citation>
    <scope>NUCLEOTIDE SEQUENCE [LARGE SCALE GENOMIC DNA]</scope>
    <source>
        <strain>MW2</strain>
    </source>
</reference>
<gene>
    <name evidence="1" type="primary">cysS</name>
    <name type="ordered locus">MW0485</name>
</gene>